<gene>
    <name evidence="1" type="primary">hisD</name>
    <name type="ordered locus">BB4854</name>
</gene>
<evidence type="ECO:0000255" key="1">
    <source>
        <dbReference type="HAMAP-Rule" id="MF_01024"/>
    </source>
</evidence>
<organism>
    <name type="scientific">Bordetella bronchiseptica (strain ATCC BAA-588 / NCTC 13252 / RB50)</name>
    <name type="common">Alcaligenes bronchisepticus</name>
    <dbReference type="NCBI Taxonomy" id="257310"/>
    <lineage>
        <taxon>Bacteria</taxon>
        <taxon>Pseudomonadati</taxon>
        <taxon>Pseudomonadota</taxon>
        <taxon>Betaproteobacteria</taxon>
        <taxon>Burkholderiales</taxon>
        <taxon>Alcaligenaceae</taxon>
        <taxon>Bordetella</taxon>
    </lineage>
</organism>
<keyword id="KW-0028">Amino-acid biosynthesis</keyword>
<keyword id="KW-0368">Histidine biosynthesis</keyword>
<keyword id="KW-0479">Metal-binding</keyword>
<keyword id="KW-0520">NAD</keyword>
<keyword id="KW-0560">Oxidoreductase</keyword>
<keyword id="KW-0862">Zinc</keyword>
<protein>
    <recommendedName>
        <fullName evidence="1">Histidinol dehydrogenase</fullName>
        <shortName evidence="1">HDH</shortName>
        <ecNumber evidence="1">1.1.1.23</ecNumber>
    </recommendedName>
</protein>
<sequence length="440" mass="46882">MQYHDAMALINRLDSRDPGFKTALSQLLAFEAEQDESIDQAAAGILADVRRRGDAALLEYTQRFDRLAVDDATALEIPQADWHAALDSLPAAQRQALEAAAARVRAYHERQRGETWTYTEADGTMLGQQITALDRVGLYVPGGKAAYPSSVLMNAIPAKVAGVPELIMVTPTPDGVRNPIVLAAAAIAGVDRAFAIGGAQAVGALAYGTATVPAVDKIVGPGNAYVAAAKRRVFGTVGIDMIAGPSEILVICDGKTPADWIAMDLFSQAEHDELAQSILLCPDAAFLAEVEAAIERLLPGMPRADILRVSLANRGALILVRDLEEACAIANDIAPEHLEISTEQPQRWTALIRHAGAIFMGRYSSEALGDYCAGPNHVLPTSRTARFSSPLGVYDFQKRSSLIQVSREGAQTLGRIAAELALGEGLQAHAASAQYRLDQP</sequence>
<name>HISX_BORBR</name>
<reference key="1">
    <citation type="journal article" date="2003" name="Nat. Genet.">
        <title>Comparative analysis of the genome sequences of Bordetella pertussis, Bordetella parapertussis and Bordetella bronchiseptica.</title>
        <authorList>
            <person name="Parkhill J."/>
            <person name="Sebaihia M."/>
            <person name="Preston A."/>
            <person name="Murphy L.D."/>
            <person name="Thomson N.R."/>
            <person name="Harris D.E."/>
            <person name="Holden M.T.G."/>
            <person name="Churcher C.M."/>
            <person name="Bentley S.D."/>
            <person name="Mungall K.L."/>
            <person name="Cerdeno-Tarraga A.-M."/>
            <person name="Temple L."/>
            <person name="James K.D."/>
            <person name="Harris B."/>
            <person name="Quail M.A."/>
            <person name="Achtman M."/>
            <person name="Atkin R."/>
            <person name="Baker S."/>
            <person name="Basham D."/>
            <person name="Bason N."/>
            <person name="Cherevach I."/>
            <person name="Chillingworth T."/>
            <person name="Collins M."/>
            <person name="Cronin A."/>
            <person name="Davis P."/>
            <person name="Doggett J."/>
            <person name="Feltwell T."/>
            <person name="Goble A."/>
            <person name="Hamlin N."/>
            <person name="Hauser H."/>
            <person name="Holroyd S."/>
            <person name="Jagels K."/>
            <person name="Leather S."/>
            <person name="Moule S."/>
            <person name="Norberczak H."/>
            <person name="O'Neil S."/>
            <person name="Ormond D."/>
            <person name="Price C."/>
            <person name="Rabbinowitsch E."/>
            <person name="Rutter S."/>
            <person name="Sanders M."/>
            <person name="Saunders D."/>
            <person name="Seeger K."/>
            <person name="Sharp S."/>
            <person name="Simmonds M."/>
            <person name="Skelton J."/>
            <person name="Squares R."/>
            <person name="Squares S."/>
            <person name="Stevens K."/>
            <person name="Unwin L."/>
            <person name="Whitehead S."/>
            <person name="Barrell B.G."/>
            <person name="Maskell D.J."/>
        </authorList>
    </citation>
    <scope>NUCLEOTIDE SEQUENCE [LARGE SCALE GENOMIC DNA]</scope>
    <source>
        <strain>ATCC BAA-588 / NCTC 13252 / RB50</strain>
    </source>
</reference>
<dbReference type="EC" id="1.1.1.23" evidence="1"/>
<dbReference type="EMBL" id="BX640451">
    <property type="protein sequence ID" value="CAE35217.1"/>
    <property type="molecule type" value="Genomic_DNA"/>
</dbReference>
<dbReference type="SMR" id="Q7WDY4"/>
<dbReference type="KEGG" id="bbr:BB4854"/>
<dbReference type="eggNOG" id="COG0141">
    <property type="taxonomic scope" value="Bacteria"/>
</dbReference>
<dbReference type="HOGENOM" id="CLU_006732_3_3_4"/>
<dbReference type="UniPathway" id="UPA00031">
    <property type="reaction ID" value="UER00014"/>
</dbReference>
<dbReference type="Proteomes" id="UP000001027">
    <property type="component" value="Chromosome"/>
</dbReference>
<dbReference type="GO" id="GO:0005829">
    <property type="term" value="C:cytosol"/>
    <property type="evidence" value="ECO:0007669"/>
    <property type="project" value="TreeGrafter"/>
</dbReference>
<dbReference type="GO" id="GO:0004399">
    <property type="term" value="F:histidinol dehydrogenase activity"/>
    <property type="evidence" value="ECO:0007669"/>
    <property type="project" value="UniProtKB-UniRule"/>
</dbReference>
<dbReference type="GO" id="GO:0051287">
    <property type="term" value="F:NAD binding"/>
    <property type="evidence" value="ECO:0007669"/>
    <property type="project" value="InterPro"/>
</dbReference>
<dbReference type="GO" id="GO:0008270">
    <property type="term" value="F:zinc ion binding"/>
    <property type="evidence" value="ECO:0007669"/>
    <property type="project" value="UniProtKB-UniRule"/>
</dbReference>
<dbReference type="GO" id="GO:0000105">
    <property type="term" value="P:L-histidine biosynthetic process"/>
    <property type="evidence" value="ECO:0007669"/>
    <property type="project" value="UniProtKB-UniRule"/>
</dbReference>
<dbReference type="CDD" id="cd06572">
    <property type="entry name" value="Histidinol_dh"/>
    <property type="match status" value="1"/>
</dbReference>
<dbReference type="FunFam" id="3.40.50.1980:FF:000010">
    <property type="entry name" value="Histidinol dehydrogenase"/>
    <property type="match status" value="1"/>
</dbReference>
<dbReference type="FunFam" id="3.40.50.1980:FF:000026">
    <property type="entry name" value="Histidinol dehydrogenase"/>
    <property type="match status" value="1"/>
</dbReference>
<dbReference type="Gene3D" id="1.20.5.1300">
    <property type="match status" value="1"/>
</dbReference>
<dbReference type="Gene3D" id="3.40.50.1980">
    <property type="entry name" value="Nitrogenase molybdenum iron protein domain"/>
    <property type="match status" value="2"/>
</dbReference>
<dbReference type="HAMAP" id="MF_01024">
    <property type="entry name" value="HisD"/>
    <property type="match status" value="1"/>
</dbReference>
<dbReference type="InterPro" id="IPR016161">
    <property type="entry name" value="Ald_DH/histidinol_DH"/>
</dbReference>
<dbReference type="InterPro" id="IPR001692">
    <property type="entry name" value="Histidinol_DH_CS"/>
</dbReference>
<dbReference type="InterPro" id="IPR022695">
    <property type="entry name" value="Histidinol_DH_monofunct"/>
</dbReference>
<dbReference type="InterPro" id="IPR012131">
    <property type="entry name" value="Hstdl_DH"/>
</dbReference>
<dbReference type="NCBIfam" id="TIGR00069">
    <property type="entry name" value="hisD"/>
    <property type="match status" value="1"/>
</dbReference>
<dbReference type="PANTHER" id="PTHR21256:SF2">
    <property type="entry name" value="HISTIDINE BIOSYNTHESIS TRIFUNCTIONAL PROTEIN"/>
    <property type="match status" value="1"/>
</dbReference>
<dbReference type="PANTHER" id="PTHR21256">
    <property type="entry name" value="HISTIDINOL DEHYDROGENASE HDH"/>
    <property type="match status" value="1"/>
</dbReference>
<dbReference type="Pfam" id="PF00815">
    <property type="entry name" value="Histidinol_dh"/>
    <property type="match status" value="1"/>
</dbReference>
<dbReference type="PIRSF" id="PIRSF000099">
    <property type="entry name" value="Histidinol_dh"/>
    <property type="match status" value="1"/>
</dbReference>
<dbReference type="PRINTS" id="PR00083">
    <property type="entry name" value="HOLDHDRGNASE"/>
</dbReference>
<dbReference type="SUPFAM" id="SSF53720">
    <property type="entry name" value="ALDH-like"/>
    <property type="match status" value="1"/>
</dbReference>
<dbReference type="PROSITE" id="PS00611">
    <property type="entry name" value="HISOL_DEHYDROGENASE"/>
    <property type="match status" value="1"/>
</dbReference>
<feature type="chain" id="PRO_0000135736" description="Histidinol dehydrogenase">
    <location>
        <begin position="1"/>
        <end position="440"/>
    </location>
</feature>
<feature type="active site" description="Proton acceptor" evidence="1">
    <location>
        <position position="336"/>
    </location>
</feature>
<feature type="active site" description="Proton acceptor" evidence="1">
    <location>
        <position position="337"/>
    </location>
</feature>
<feature type="binding site" evidence="1">
    <location>
        <position position="139"/>
    </location>
    <ligand>
        <name>NAD(+)</name>
        <dbReference type="ChEBI" id="CHEBI:57540"/>
    </ligand>
</feature>
<feature type="binding site" evidence="1">
    <location>
        <position position="200"/>
    </location>
    <ligand>
        <name>NAD(+)</name>
        <dbReference type="ChEBI" id="CHEBI:57540"/>
    </ligand>
</feature>
<feature type="binding site" evidence="1">
    <location>
        <position position="223"/>
    </location>
    <ligand>
        <name>NAD(+)</name>
        <dbReference type="ChEBI" id="CHEBI:57540"/>
    </ligand>
</feature>
<feature type="binding site" evidence="1">
    <location>
        <position position="246"/>
    </location>
    <ligand>
        <name>substrate</name>
    </ligand>
</feature>
<feature type="binding site" evidence="1">
    <location>
        <position position="268"/>
    </location>
    <ligand>
        <name>substrate</name>
    </ligand>
</feature>
<feature type="binding site" evidence="1">
    <location>
        <position position="268"/>
    </location>
    <ligand>
        <name>Zn(2+)</name>
        <dbReference type="ChEBI" id="CHEBI:29105"/>
    </ligand>
</feature>
<feature type="binding site" evidence="1">
    <location>
        <position position="271"/>
    </location>
    <ligand>
        <name>substrate</name>
    </ligand>
</feature>
<feature type="binding site" evidence="1">
    <location>
        <position position="271"/>
    </location>
    <ligand>
        <name>Zn(2+)</name>
        <dbReference type="ChEBI" id="CHEBI:29105"/>
    </ligand>
</feature>
<feature type="binding site" evidence="1">
    <location>
        <position position="337"/>
    </location>
    <ligand>
        <name>substrate</name>
    </ligand>
</feature>
<feature type="binding site" evidence="1">
    <location>
        <position position="370"/>
    </location>
    <ligand>
        <name>substrate</name>
    </ligand>
</feature>
<feature type="binding site" evidence="1">
    <location>
        <position position="370"/>
    </location>
    <ligand>
        <name>Zn(2+)</name>
        <dbReference type="ChEBI" id="CHEBI:29105"/>
    </ligand>
</feature>
<feature type="binding site" evidence="1">
    <location>
        <position position="424"/>
    </location>
    <ligand>
        <name>substrate</name>
    </ligand>
</feature>
<feature type="binding site" evidence="1">
    <location>
        <position position="429"/>
    </location>
    <ligand>
        <name>substrate</name>
    </ligand>
</feature>
<feature type="binding site" evidence="1">
    <location>
        <position position="429"/>
    </location>
    <ligand>
        <name>Zn(2+)</name>
        <dbReference type="ChEBI" id="CHEBI:29105"/>
    </ligand>
</feature>
<proteinExistence type="inferred from homology"/>
<comment type="function">
    <text evidence="1">Catalyzes the sequential NAD-dependent oxidations of L-histidinol to L-histidinaldehyde and then to L-histidine.</text>
</comment>
<comment type="catalytic activity">
    <reaction evidence="1">
        <text>L-histidinol + 2 NAD(+) + H2O = L-histidine + 2 NADH + 3 H(+)</text>
        <dbReference type="Rhea" id="RHEA:20641"/>
        <dbReference type="ChEBI" id="CHEBI:15377"/>
        <dbReference type="ChEBI" id="CHEBI:15378"/>
        <dbReference type="ChEBI" id="CHEBI:57540"/>
        <dbReference type="ChEBI" id="CHEBI:57595"/>
        <dbReference type="ChEBI" id="CHEBI:57699"/>
        <dbReference type="ChEBI" id="CHEBI:57945"/>
        <dbReference type="EC" id="1.1.1.23"/>
    </reaction>
</comment>
<comment type="cofactor">
    <cofactor evidence="1">
        <name>Zn(2+)</name>
        <dbReference type="ChEBI" id="CHEBI:29105"/>
    </cofactor>
    <text evidence="1">Binds 1 zinc ion per subunit.</text>
</comment>
<comment type="pathway">
    <text evidence="1">Amino-acid biosynthesis; L-histidine biosynthesis; L-histidine from 5-phospho-alpha-D-ribose 1-diphosphate: step 9/9.</text>
</comment>
<comment type="similarity">
    <text evidence="1">Belongs to the histidinol dehydrogenase family.</text>
</comment>
<accession>Q7WDY4</accession>